<organism>
    <name type="scientific">Xanthomonas euvesicatoria pv. vesicatoria (strain 85-10)</name>
    <name type="common">Xanthomonas campestris pv. vesicatoria</name>
    <dbReference type="NCBI Taxonomy" id="316273"/>
    <lineage>
        <taxon>Bacteria</taxon>
        <taxon>Pseudomonadati</taxon>
        <taxon>Pseudomonadota</taxon>
        <taxon>Gammaproteobacteria</taxon>
        <taxon>Lysobacterales</taxon>
        <taxon>Lysobacteraceae</taxon>
        <taxon>Xanthomonas</taxon>
    </lineage>
</organism>
<accession>Q3BNI2</accession>
<evidence type="ECO:0000255" key="1">
    <source>
        <dbReference type="HAMAP-Rule" id="MF_00148"/>
    </source>
</evidence>
<reference key="1">
    <citation type="journal article" date="2005" name="J. Bacteriol.">
        <title>Insights into genome plasticity and pathogenicity of the plant pathogenic Bacterium Xanthomonas campestris pv. vesicatoria revealed by the complete genome sequence.</title>
        <authorList>
            <person name="Thieme F."/>
            <person name="Koebnik R."/>
            <person name="Bekel T."/>
            <person name="Berger C."/>
            <person name="Boch J."/>
            <person name="Buettner D."/>
            <person name="Caldana C."/>
            <person name="Gaigalat L."/>
            <person name="Goesmann A."/>
            <person name="Kay S."/>
            <person name="Kirchner O."/>
            <person name="Lanz C."/>
            <person name="Linke B."/>
            <person name="McHardy A.C."/>
            <person name="Meyer F."/>
            <person name="Mittenhuber G."/>
            <person name="Nies D.H."/>
            <person name="Niesbach-Kloesgen U."/>
            <person name="Patschkowski T."/>
            <person name="Rueckert C."/>
            <person name="Rupp O."/>
            <person name="Schneiker S."/>
            <person name="Schuster S.C."/>
            <person name="Vorhoelter F.J."/>
            <person name="Weber E."/>
            <person name="Puehler A."/>
            <person name="Bonas U."/>
            <person name="Bartels D."/>
            <person name="Kaiser O."/>
        </authorList>
    </citation>
    <scope>NUCLEOTIDE SEQUENCE [LARGE SCALE GENOMIC DNA]</scope>
    <source>
        <strain>85-10</strain>
    </source>
</reference>
<name>UNG_XANE5</name>
<keyword id="KW-0963">Cytoplasm</keyword>
<keyword id="KW-0227">DNA damage</keyword>
<keyword id="KW-0234">DNA repair</keyword>
<keyword id="KW-0378">Hydrolase</keyword>
<protein>
    <recommendedName>
        <fullName evidence="1">Uracil-DNA glycosylase</fullName>
        <shortName evidence="1">UDG</shortName>
        <ecNumber evidence="1">3.2.2.27</ecNumber>
    </recommendedName>
</protein>
<feature type="chain" id="PRO_1000009962" description="Uracil-DNA glycosylase">
    <location>
        <begin position="1"/>
        <end position="241"/>
    </location>
</feature>
<feature type="active site" description="Proton acceptor" evidence="1">
    <location>
        <position position="71"/>
    </location>
</feature>
<dbReference type="EC" id="3.2.2.27" evidence="1"/>
<dbReference type="EMBL" id="AM039952">
    <property type="protein sequence ID" value="CAJ25681.1"/>
    <property type="molecule type" value="Genomic_DNA"/>
</dbReference>
<dbReference type="RefSeq" id="WP_011348803.1">
    <property type="nucleotide sequence ID" value="NZ_CP017190.1"/>
</dbReference>
<dbReference type="SMR" id="Q3BNI2"/>
<dbReference type="STRING" id="456327.BJD11_02885"/>
<dbReference type="GeneID" id="61776376"/>
<dbReference type="KEGG" id="xcv:XCV3950"/>
<dbReference type="eggNOG" id="COG0692">
    <property type="taxonomic scope" value="Bacteria"/>
</dbReference>
<dbReference type="HOGENOM" id="CLU_032162_3_1_6"/>
<dbReference type="Proteomes" id="UP000007069">
    <property type="component" value="Chromosome"/>
</dbReference>
<dbReference type="GO" id="GO:0005737">
    <property type="term" value="C:cytoplasm"/>
    <property type="evidence" value="ECO:0007669"/>
    <property type="project" value="UniProtKB-SubCell"/>
</dbReference>
<dbReference type="GO" id="GO:0004844">
    <property type="term" value="F:uracil DNA N-glycosylase activity"/>
    <property type="evidence" value="ECO:0007669"/>
    <property type="project" value="UniProtKB-UniRule"/>
</dbReference>
<dbReference type="GO" id="GO:0097510">
    <property type="term" value="P:base-excision repair, AP site formation via deaminated base removal"/>
    <property type="evidence" value="ECO:0007669"/>
    <property type="project" value="TreeGrafter"/>
</dbReference>
<dbReference type="CDD" id="cd10027">
    <property type="entry name" value="UDG-F1-like"/>
    <property type="match status" value="1"/>
</dbReference>
<dbReference type="FunFam" id="3.40.470.10:FF:000001">
    <property type="entry name" value="Uracil-DNA glycosylase"/>
    <property type="match status" value="1"/>
</dbReference>
<dbReference type="Gene3D" id="3.40.470.10">
    <property type="entry name" value="Uracil-DNA glycosylase-like domain"/>
    <property type="match status" value="1"/>
</dbReference>
<dbReference type="HAMAP" id="MF_00148">
    <property type="entry name" value="UDG"/>
    <property type="match status" value="1"/>
</dbReference>
<dbReference type="InterPro" id="IPR002043">
    <property type="entry name" value="UDG_fam1"/>
</dbReference>
<dbReference type="InterPro" id="IPR018085">
    <property type="entry name" value="Ura-DNA_Glyclase_AS"/>
</dbReference>
<dbReference type="InterPro" id="IPR005122">
    <property type="entry name" value="Uracil-DNA_glycosylase-like"/>
</dbReference>
<dbReference type="InterPro" id="IPR036895">
    <property type="entry name" value="Uracil-DNA_glycosylase-like_sf"/>
</dbReference>
<dbReference type="NCBIfam" id="NF003588">
    <property type="entry name" value="PRK05254.1-1"/>
    <property type="match status" value="1"/>
</dbReference>
<dbReference type="NCBIfam" id="NF003589">
    <property type="entry name" value="PRK05254.1-2"/>
    <property type="match status" value="1"/>
</dbReference>
<dbReference type="NCBIfam" id="NF003591">
    <property type="entry name" value="PRK05254.1-4"/>
    <property type="match status" value="1"/>
</dbReference>
<dbReference type="NCBIfam" id="NF003592">
    <property type="entry name" value="PRK05254.1-5"/>
    <property type="match status" value="1"/>
</dbReference>
<dbReference type="NCBIfam" id="TIGR00628">
    <property type="entry name" value="ung"/>
    <property type="match status" value="1"/>
</dbReference>
<dbReference type="PANTHER" id="PTHR11264">
    <property type="entry name" value="URACIL-DNA GLYCOSYLASE"/>
    <property type="match status" value="1"/>
</dbReference>
<dbReference type="PANTHER" id="PTHR11264:SF0">
    <property type="entry name" value="URACIL-DNA GLYCOSYLASE"/>
    <property type="match status" value="1"/>
</dbReference>
<dbReference type="Pfam" id="PF03167">
    <property type="entry name" value="UDG"/>
    <property type="match status" value="1"/>
</dbReference>
<dbReference type="SMART" id="SM00986">
    <property type="entry name" value="UDG"/>
    <property type="match status" value="1"/>
</dbReference>
<dbReference type="SMART" id="SM00987">
    <property type="entry name" value="UreE_C"/>
    <property type="match status" value="1"/>
</dbReference>
<dbReference type="SUPFAM" id="SSF52141">
    <property type="entry name" value="Uracil-DNA glycosylase-like"/>
    <property type="match status" value="1"/>
</dbReference>
<dbReference type="PROSITE" id="PS00130">
    <property type="entry name" value="U_DNA_GLYCOSYLASE"/>
    <property type="match status" value="1"/>
</dbReference>
<comment type="function">
    <text evidence="1">Excises uracil residues from the DNA which can arise as a result of misincorporation of dUMP residues by DNA polymerase or due to deamination of cytosine.</text>
</comment>
<comment type="catalytic activity">
    <reaction evidence="1">
        <text>Hydrolyzes single-stranded DNA or mismatched double-stranded DNA and polynucleotides, releasing free uracil.</text>
        <dbReference type="EC" id="3.2.2.27"/>
    </reaction>
</comment>
<comment type="subcellular location">
    <subcellularLocation>
        <location evidence="1">Cytoplasm</location>
    </subcellularLocation>
</comment>
<comment type="similarity">
    <text evidence="1">Belongs to the uracil-DNA glycosylase (UDG) superfamily. UNG family.</text>
</comment>
<proteinExistence type="inferred from homology"/>
<gene>
    <name evidence="1" type="primary">ung</name>
    <name type="ordered locus">XCV3950</name>
</gene>
<sequence>MTEGEGRIQLEPSWKARVGDWLLRPQMQELSAFLRQRKAAGARVFPPGPQIFAAFDATPFEQVKVVILGQDPYHGEGQAHGLCFSVLPGVPVPPSLLNIYKEIQDDLGIARPDHGYLMPWARQGVLLLNAVLTVEQGRAGAHQNKGWEGFTDHVVDTLNREREGLVFLLWGSYAQSKGKVIDQARHRVLKAPHPSPLSAHRGFLGCRHFSKTNDHLRRRGLSPIDWSLPPRSALDTTSTGA</sequence>